<gene>
    <name type="primary">steA</name>
    <name type="ordered locus">STM14_1912</name>
</gene>
<feature type="chain" id="PRO_0000391636" description="Secreted effector protein SteA">
    <location>
        <begin position="1"/>
        <end position="210"/>
    </location>
</feature>
<dbReference type="EMBL" id="CP001363">
    <property type="protein sequence ID" value="ACY88383.1"/>
    <property type="molecule type" value="Genomic_DNA"/>
</dbReference>
<dbReference type="RefSeq" id="WP_001147134.1">
    <property type="nucleotide sequence ID" value="NZ_CP043402.1"/>
</dbReference>
<dbReference type="KEGG" id="seo:STM14_1912"/>
<dbReference type="PATRIC" id="fig|588858.6.peg.1820"/>
<dbReference type="HOGENOM" id="CLU_088946_0_0_6"/>
<dbReference type="BioCyc" id="SENT588858:STM14_RS08790-MONOMER"/>
<dbReference type="PHI-base" id="PHI:3749"/>
<dbReference type="Proteomes" id="UP000002695">
    <property type="component" value="Chromosome"/>
</dbReference>
<dbReference type="GO" id="GO:0005576">
    <property type="term" value="C:extracellular region"/>
    <property type="evidence" value="ECO:0007669"/>
    <property type="project" value="UniProtKB-SubCell"/>
</dbReference>
<dbReference type="GO" id="GO:0030430">
    <property type="term" value="C:host cell cytoplasm"/>
    <property type="evidence" value="ECO:0007669"/>
    <property type="project" value="UniProtKB-SubCell"/>
</dbReference>
<accession>D0ZXR5</accession>
<name>STEA_SALT1</name>
<protein>
    <recommendedName>
        <fullName>Secreted effector protein SteA</fullName>
    </recommendedName>
    <alternativeName>
        <fullName>Salmonella translocated effector A</fullName>
    </alternativeName>
</protein>
<comment type="function">
    <text evidence="1">Effector proteins function to alter host cell physiology and promote bacterial survival in host tissues. Could be required for passage of bacteria from the peritoneal cavity into the spleen, for survival and replication within host cells, or for avoiding host immune response.</text>
</comment>
<comment type="subcellular location">
    <subcellularLocation>
        <location evidence="1">Secreted</location>
    </subcellularLocation>
    <subcellularLocation>
        <location evidence="1">Host cytoplasm</location>
    </subcellularLocation>
    <text>Secreted via type III secretion systems 1 and 2 (SPI-1 and SPI-2 T3SS), and delivered into the host cytoplasm. Localizes to the trans-Golgi network within both transfected and infected host epithelial cells.</text>
</comment>
<comment type="disruption phenotype">
    <text evidence="1">Mutants have a competitive defect in colonization of mouse spleen.</text>
</comment>
<proteinExistence type="predicted"/>
<evidence type="ECO:0000269" key="1">
    <source>
    </source>
</evidence>
<reference key="1">
    <citation type="journal article" date="2010" name="J. Bacteriol.">
        <title>Short-term signatures of evolutionary change in the Salmonella enterica serovar typhimurium 14028 genome.</title>
        <authorList>
            <person name="Jarvik T."/>
            <person name="Smillie C."/>
            <person name="Groisman E.A."/>
            <person name="Ochman H."/>
        </authorList>
    </citation>
    <scope>NUCLEOTIDE SEQUENCE [LARGE SCALE GENOMIC DNA]</scope>
    <source>
        <strain>14028s / SGSC 2262</strain>
    </source>
</reference>
<reference key="2">
    <citation type="journal article" date="2005" name="Infect. Immun.">
        <title>Identification of new secreted effectors in Salmonella enterica serovar Typhimurium.</title>
        <authorList>
            <person name="Geddes K."/>
            <person name="Worley M."/>
            <person name="Niemann G."/>
            <person name="Heffron F."/>
        </authorList>
    </citation>
    <scope>FUNCTION</scope>
    <scope>SUBCELLULAR LOCATION</scope>
    <scope>SECRETION VIA TYPE III SECRETION SYSTEM</scope>
    <scope>DISRUPTION PHENOTYPE</scope>
</reference>
<keyword id="KW-1035">Host cytoplasm</keyword>
<keyword id="KW-0964">Secreted</keyword>
<keyword id="KW-0843">Virulence</keyword>
<sequence length="210" mass="23618">MPYTSVSTYARALSGNKLPHVAAGDYENKLSTKIMKGILYVLTAGLAYGFTRVIEHYCNVTPKVAEFCANAGNIHNHLADAVRDGLFTIDVELSDGRMLTFEQLSLIAEGKPIVRISDGEHTVEVEGTFEEICMRLEEGFFEAPAYYDYDIDEKYKTVRERMAAYNALPQALGAIPCLEYYIARASNMQEAKAQWAADIKARYHNYLDNY</sequence>
<organism>
    <name type="scientific">Salmonella typhimurium (strain 14028s / SGSC 2262)</name>
    <dbReference type="NCBI Taxonomy" id="588858"/>
    <lineage>
        <taxon>Bacteria</taxon>
        <taxon>Pseudomonadati</taxon>
        <taxon>Pseudomonadota</taxon>
        <taxon>Gammaproteobacteria</taxon>
        <taxon>Enterobacterales</taxon>
        <taxon>Enterobacteriaceae</taxon>
        <taxon>Salmonella</taxon>
    </lineage>
</organism>